<evidence type="ECO:0000250" key="1"/>
<evidence type="ECO:0000256" key="2">
    <source>
        <dbReference type="SAM" id="MobiDB-lite"/>
    </source>
</evidence>
<evidence type="ECO:0000305" key="3"/>
<dbReference type="EMBL" id="BC112384">
    <property type="protein sequence ID" value="AAI12385.1"/>
    <property type="molecule type" value="mRNA"/>
</dbReference>
<dbReference type="RefSeq" id="NP_001037691.1">
    <property type="nucleotide sequence ID" value="NM_001044226.1"/>
</dbReference>
<dbReference type="RefSeq" id="XP_006249445.1">
    <property type="nucleotide sequence ID" value="XM_006249383.5"/>
</dbReference>
<dbReference type="RefSeq" id="XP_006249446.1">
    <property type="nucleotide sequence ID" value="XM_006249384.5"/>
</dbReference>
<dbReference type="FunCoup" id="Q2KJ10">
    <property type="interactions" value="152"/>
</dbReference>
<dbReference type="STRING" id="10116.ENSRNOP00000054067"/>
<dbReference type="GlyGen" id="Q2KJ10">
    <property type="glycosylation" value="1 site"/>
</dbReference>
<dbReference type="PhosphoSitePlus" id="Q2KJ10"/>
<dbReference type="PaxDb" id="10116-ENSRNOP00000054067"/>
<dbReference type="Ensembl" id="ENSRNOT00000057242.3">
    <property type="protein sequence ID" value="ENSRNOP00000054067.2"/>
    <property type="gene ID" value="ENSRNOG00000037720.3"/>
</dbReference>
<dbReference type="GeneID" id="288683"/>
<dbReference type="KEGG" id="rno:288683"/>
<dbReference type="AGR" id="RGD:1306772"/>
<dbReference type="CTD" id="84934"/>
<dbReference type="RGD" id="1306772">
    <property type="gene designation" value="Rita1"/>
</dbReference>
<dbReference type="eggNOG" id="ENOG502S61Y">
    <property type="taxonomic scope" value="Eukaryota"/>
</dbReference>
<dbReference type="GeneTree" id="ENSGT00390000013005"/>
<dbReference type="HOGENOM" id="CLU_062251_0_0_1"/>
<dbReference type="InParanoid" id="Q2KJ10"/>
<dbReference type="OMA" id="WEGPWMA"/>
<dbReference type="OrthoDB" id="10061257at2759"/>
<dbReference type="PhylomeDB" id="Q2KJ10"/>
<dbReference type="TreeFam" id="TF337291"/>
<dbReference type="PRO" id="PR:Q2KJ10"/>
<dbReference type="Proteomes" id="UP000002494">
    <property type="component" value="Chromosome 12"/>
</dbReference>
<dbReference type="Bgee" id="ENSRNOG00000037720">
    <property type="expression patterns" value="Expressed in skeletal muscle tissue and 20 other cell types or tissues"/>
</dbReference>
<dbReference type="GO" id="GO:0005813">
    <property type="term" value="C:centrosome"/>
    <property type="evidence" value="ECO:0000250"/>
    <property type="project" value="UniProtKB"/>
</dbReference>
<dbReference type="GO" id="GO:0005737">
    <property type="term" value="C:cytoplasm"/>
    <property type="evidence" value="ECO:0000250"/>
    <property type="project" value="UniProtKB"/>
</dbReference>
<dbReference type="GO" id="GO:0005634">
    <property type="term" value="C:nucleus"/>
    <property type="evidence" value="ECO:0000250"/>
    <property type="project" value="UniProtKB"/>
</dbReference>
<dbReference type="GO" id="GO:0015631">
    <property type="term" value="F:tubulin binding"/>
    <property type="evidence" value="ECO:0000250"/>
    <property type="project" value="UniProtKB"/>
</dbReference>
<dbReference type="GO" id="GO:0045746">
    <property type="term" value="P:negative regulation of Notch signaling pathway"/>
    <property type="evidence" value="ECO:0000250"/>
    <property type="project" value="UniProtKB"/>
</dbReference>
<dbReference type="GO" id="GO:0022008">
    <property type="term" value="P:neurogenesis"/>
    <property type="evidence" value="ECO:0000250"/>
    <property type="project" value="UniProtKB"/>
</dbReference>
<dbReference type="GO" id="GO:0007219">
    <property type="term" value="P:Notch signaling pathway"/>
    <property type="evidence" value="ECO:0007669"/>
    <property type="project" value="UniProtKB-KW"/>
</dbReference>
<dbReference type="GO" id="GO:0051168">
    <property type="term" value="P:nuclear export"/>
    <property type="evidence" value="ECO:0000266"/>
    <property type="project" value="RGD"/>
</dbReference>
<dbReference type="InterPro" id="IPR031418">
    <property type="entry name" value="RITA1"/>
</dbReference>
<dbReference type="PANTHER" id="PTHR34917">
    <property type="entry name" value="RBPJ-INTERACTING AND TUBULIN-ASSOCIATED PROTEIN 1"/>
    <property type="match status" value="1"/>
</dbReference>
<dbReference type="PANTHER" id="PTHR34917:SF1">
    <property type="entry name" value="RBPJ-INTERACTING AND TUBULIN-ASSOCIATED PROTEIN 1"/>
    <property type="match status" value="1"/>
</dbReference>
<dbReference type="Pfam" id="PF17066">
    <property type="entry name" value="RITA"/>
    <property type="match status" value="1"/>
</dbReference>
<name>RITA1_RAT</name>
<reference key="1">
    <citation type="journal article" date="2004" name="Genome Res.">
        <title>The status, quality, and expansion of the NIH full-length cDNA project: the Mammalian Gene Collection (MGC).</title>
        <authorList>
            <consortium name="The MGC Project Team"/>
        </authorList>
    </citation>
    <scope>NUCLEOTIDE SEQUENCE [LARGE SCALE MRNA]</scope>
    <source>
        <tissue>Prostate</tissue>
    </source>
</reference>
<gene>
    <name type="primary">Rita1</name>
    <name type="synonym">Rita</name>
</gene>
<protein>
    <recommendedName>
        <fullName>RBPJ-interacting and tubulin-associated protein 1</fullName>
    </recommendedName>
    <alternativeName>
        <fullName>RBPJ-interacting and tubulin-associated protein</fullName>
    </alternativeName>
</protein>
<feature type="chain" id="PRO_0000294431" description="RBPJ-interacting and tubulin-associated protein 1">
    <location>
        <begin position="1"/>
        <end position="258"/>
    </location>
</feature>
<feature type="region of interest" description="Disordered" evidence="2">
    <location>
        <begin position="28"/>
        <end position="86"/>
    </location>
</feature>
<feature type="region of interest" description="Interaction with RBPJ/RBPSUH" evidence="1">
    <location>
        <begin position="117"/>
        <end position="145"/>
    </location>
</feature>
<feature type="region of interest" description="Disordered" evidence="2">
    <location>
        <begin position="132"/>
        <end position="182"/>
    </location>
</feature>
<feature type="region of interest" description="Interaction with tubulin" evidence="1">
    <location>
        <begin position="145"/>
        <end position="258"/>
    </location>
</feature>
<feature type="region of interest" description="Disordered" evidence="2">
    <location>
        <begin position="195"/>
        <end position="258"/>
    </location>
</feature>
<feature type="short sequence motif" description="Nuclear localization signal" evidence="1">
    <location>
        <begin position="81"/>
        <end position="97"/>
    </location>
</feature>
<feature type="compositionally biased region" description="Polar residues" evidence="2">
    <location>
        <begin position="71"/>
        <end position="81"/>
    </location>
</feature>
<feature type="compositionally biased region" description="Polar residues" evidence="2">
    <location>
        <begin position="201"/>
        <end position="212"/>
    </location>
</feature>
<feature type="compositionally biased region" description="Polar residues" evidence="2">
    <location>
        <begin position="236"/>
        <end position="245"/>
    </location>
</feature>
<accession>Q2KJ10</accession>
<organism>
    <name type="scientific">Rattus norvegicus</name>
    <name type="common">Rat</name>
    <dbReference type="NCBI Taxonomy" id="10116"/>
    <lineage>
        <taxon>Eukaryota</taxon>
        <taxon>Metazoa</taxon>
        <taxon>Chordata</taxon>
        <taxon>Craniata</taxon>
        <taxon>Vertebrata</taxon>
        <taxon>Euteleostomi</taxon>
        <taxon>Mammalia</taxon>
        <taxon>Eutheria</taxon>
        <taxon>Euarchontoglires</taxon>
        <taxon>Glires</taxon>
        <taxon>Rodentia</taxon>
        <taxon>Myomorpha</taxon>
        <taxon>Muroidea</taxon>
        <taxon>Muridae</taxon>
        <taxon>Murinae</taxon>
        <taxon>Rattus</taxon>
    </lineage>
</organism>
<comment type="function">
    <text evidence="1">Tubulin-binding protein that acts as a negative regulator of Notch signaling pathway. Shuttles between the cytoplasm and the nucleus and mediates the nuclear export of RBPJ/RBPSUH, thereby preventing the interaction between RBPJ/RBPSUH and NICD product of Notch proteins (Notch intracellular domain), leading to down-regulate Notch-mediated transcription. May play a role in neurogenesis (By similarity).</text>
</comment>
<comment type="subunit">
    <text evidence="1">Interacts with RBPJ/RBPSUH.</text>
</comment>
<comment type="subcellular location">
    <subcellularLocation>
        <location evidence="1">Cytoplasm</location>
    </subcellularLocation>
    <subcellularLocation>
        <location evidence="1">Nucleus</location>
    </subcellularLocation>
    <subcellularLocation>
        <location evidence="1">Cytoplasm</location>
        <location evidence="1">Cytoskeleton</location>
        <location evidence="1">Microtubule organizing center</location>
        <location evidence="1">Centrosome</location>
    </subcellularLocation>
    <text evidence="1">Shuttles rapidly between the cytoplasm and the nucleus. The function of centrosome localization is still unclear (By similarity).</text>
</comment>
<comment type="similarity">
    <text evidence="3">Belongs to the RITA family.</text>
</comment>
<keyword id="KW-0963">Cytoplasm</keyword>
<keyword id="KW-0206">Cytoskeleton</keyword>
<keyword id="KW-0524">Neurogenesis</keyword>
<keyword id="KW-0914">Notch signaling pathway</keyword>
<keyword id="KW-0539">Nucleus</keyword>
<keyword id="KW-1185">Reference proteome</keyword>
<sequence>MQALHLQHRNPRSYRVKARASYVDETLFGSPTGTRPTLPDFDPPWVQNCNRSRGVSPGPPKVSLAKRDCESPSSRGSTPNLTPRKKNKYRLIGHTPSYCDESLFGSRPQGTSKERSRTAVEDAAKLRTLFWTPPATPRGSHSPRPRETPLRAIHPTGPPRTEPRVATGSQMVSRDGLDAPRSLGQRRSYSLTHLAVPSTGHPASTAPQTNGPWSPRPYTSGATVQSPLVTRKVCSGSVSGPTTPQRGACPQKPKPPWK</sequence>
<proteinExistence type="evidence at transcript level"/>